<name>RL17_CALBD</name>
<proteinExistence type="inferred from homology"/>
<gene>
    <name evidence="1" type="primary">rplQ</name>
    <name type="ordered locus">Athe_1716</name>
</gene>
<reference key="1">
    <citation type="submission" date="2009-01" db="EMBL/GenBank/DDBJ databases">
        <title>Complete sequence of chromosome of Caldicellulosiruptor becscii DSM 6725.</title>
        <authorList>
            <person name="Lucas S."/>
            <person name="Copeland A."/>
            <person name="Lapidus A."/>
            <person name="Glavina del Rio T."/>
            <person name="Tice H."/>
            <person name="Bruce D."/>
            <person name="Goodwin L."/>
            <person name="Pitluck S."/>
            <person name="Sims D."/>
            <person name="Meincke L."/>
            <person name="Brettin T."/>
            <person name="Detter J.C."/>
            <person name="Han C."/>
            <person name="Larimer F."/>
            <person name="Land M."/>
            <person name="Hauser L."/>
            <person name="Kyrpides N."/>
            <person name="Ovchinnikova G."/>
            <person name="Kataeva I."/>
            <person name="Adams M.W.W."/>
        </authorList>
    </citation>
    <scope>NUCLEOTIDE SEQUENCE [LARGE SCALE GENOMIC DNA]</scope>
    <source>
        <strain>ATCC BAA-1888 / DSM 6725 / KCTC 15123 / Z-1320</strain>
    </source>
</reference>
<organism>
    <name type="scientific">Caldicellulosiruptor bescii (strain ATCC BAA-1888 / DSM 6725 / KCTC 15123 / Z-1320)</name>
    <name type="common">Anaerocellum thermophilum</name>
    <dbReference type="NCBI Taxonomy" id="521460"/>
    <lineage>
        <taxon>Bacteria</taxon>
        <taxon>Bacillati</taxon>
        <taxon>Bacillota</taxon>
        <taxon>Bacillota incertae sedis</taxon>
        <taxon>Caldicellulosiruptorales</taxon>
        <taxon>Caldicellulosiruptoraceae</taxon>
        <taxon>Caldicellulosiruptor</taxon>
    </lineage>
</organism>
<evidence type="ECO:0000255" key="1">
    <source>
        <dbReference type="HAMAP-Rule" id="MF_01368"/>
    </source>
</evidence>
<evidence type="ECO:0000305" key="2"/>
<feature type="chain" id="PRO_1000183994" description="Large ribosomal subunit protein bL17">
    <location>
        <begin position="1"/>
        <end position="113"/>
    </location>
</feature>
<comment type="subunit">
    <text evidence="1">Part of the 50S ribosomal subunit. Contacts protein L32.</text>
</comment>
<comment type="similarity">
    <text evidence="1">Belongs to the bacterial ribosomal protein bL17 family.</text>
</comment>
<sequence>MNKLRKLKRDTDHRQALMRNLATSLFKHGRIMTTEAKAKDLRRIAEKLITIAKKGDLASYRRVLGYLYEEDVAYDLFQKIAPRYQGRNGGYTRIIKVGPRKGDGAMMVYIELV</sequence>
<protein>
    <recommendedName>
        <fullName evidence="1">Large ribosomal subunit protein bL17</fullName>
    </recommendedName>
    <alternativeName>
        <fullName evidence="2">50S ribosomal protein L17</fullName>
    </alternativeName>
</protein>
<keyword id="KW-0687">Ribonucleoprotein</keyword>
<keyword id="KW-0689">Ribosomal protein</keyword>
<accession>B9MKF2</accession>
<dbReference type="EMBL" id="CP001393">
    <property type="protein sequence ID" value="ACM60810.1"/>
    <property type="molecule type" value="Genomic_DNA"/>
</dbReference>
<dbReference type="RefSeq" id="WP_013402941.1">
    <property type="nucleotide sequence ID" value="NC_012034.1"/>
</dbReference>
<dbReference type="SMR" id="B9MKF2"/>
<dbReference type="STRING" id="521460.Athe_1716"/>
<dbReference type="GeneID" id="31773073"/>
<dbReference type="KEGG" id="ate:Athe_1716"/>
<dbReference type="eggNOG" id="COG0203">
    <property type="taxonomic scope" value="Bacteria"/>
</dbReference>
<dbReference type="HOGENOM" id="CLU_074407_2_2_9"/>
<dbReference type="Proteomes" id="UP000007723">
    <property type="component" value="Chromosome"/>
</dbReference>
<dbReference type="GO" id="GO:0022625">
    <property type="term" value="C:cytosolic large ribosomal subunit"/>
    <property type="evidence" value="ECO:0007669"/>
    <property type="project" value="TreeGrafter"/>
</dbReference>
<dbReference type="GO" id="GO:0003735">
    <property type="term" value="F:structural constituent of ribosome"/>
    <property type="evidence" value="ECO:0007669"/>
    <property type="project" value="InterPro"/>
</dbReference>
<dbReference type="GO" id="GO:0006412">
    <property type="term" value="P:translation"/>
    <property type="evidence" value="ECO:0007669"/>
    <property type="project" value="UniProtKB-UniRule"/>
</dbReference>
<dbReference type="FunFam" id="3.90.1030.10:FF:000001">
    <property type="entry name" value="50S ribosomal protein L17"/>
    <property type="match status" value="1"/>
</dbReference>
<dbReference type="Gene3D" id="3.90.1030.10">
    <property type="entry name" value="Ribosomal protein L17"/>
    <property type="match status" value="1"/>
</dbReference>
<dbReference type="HAMAP" id="MF_01368">
    <property type="entry name" value="Ribosomal_bL17"/>
    <property type="match status" value="1"/>
</dbReference>
<dbReference type="InterPro" id="IPR000456">
    <property type="entry name" value="Ribosomal_bL17"/>
</dbReference>
<dbReference type="InterPro" id="IPR047859">
    <property type="entry name" value="Ribosomal_bL17_CS"/>
</dbReference>
<dbReference type="InterPro" id="IPR036373">
    <property type="entry name" value="Ribosomal_bL17_sf"/>
</dbReference>
<dbReference type="NCBIfam" id="TIGR00059">
    <property type="entry name" value="L17"/>
    <property type="match status" value="1"/>
</dbReference>
<dbReference type="PANTHER" id="PTHR14413:SF16">
    <property type="entry name" value="LARGE RIBOSOMAL SUBUNIT PROTEIN BL17M"/>
    <property type="match status" value="1"/>
</dbReference>
<dbReference type="PANTHER" id="PTHR14413">
    <property type="entry name" value="RIBOSOMAL PROTEIN L17"/>
    <property type="match status" value="1"/>
</dbReference>
<dbReference type="Pfam" id="PF01196">
    <property type="entry name" value="Ribosomal_L17"/>
    <property type="match status" value="1"/>
</dbReference>
<dbReference type="SUPFAM" id="SSF64263">
    <property type="entry name" value="Prokaryotic ribosomal protein L17"/>
    <property type="match status" value="1"/>
</dbReference>
<dbReference type="PROSITE" id="PS01167">
    <property type="entry name" value="RIBOSOMAL_L17"/>
    <property type="match status" value="1"/>
</dbReference>